<reference key="1">
    <citation type="journal article" date="2000" name="Nature">
        <title>The genome sequence of the thermoacidophilic scavenger Thermoplasma acidophilum.</title>
        <authorList>
            <person name="Ruepp A."/>
            <person name="Graml W."/>
            <person name="Santos-Martinez M.-L."/>
            <person name="Koretke K.K."/>
            <person name="Volker C."/>
            <person name="Mewes H.-W."/>
            <person name="Frishman D."/>
            <person name="Stocker S."/>
            <person name="Lupas A.N."/>
            <person name="Baumeister W."/>
        </authorList>
    </citation>
    <scope>NUCLEOTIDE SEQUENCE [LARGE SCALE GENOMIC DNA]</scope>
    <source>
        <strain>ATCC 25905 / DSM 1728 / JCM 9062 / NBRC 15155 / AMRC-C165</strain>
    </source>
</reference>
<comment type="similarity">
    <text evidence="1">Belongs to the UPF0284 family.</text>
</comment>
<dbReference type="EMBL" id="AL445063">
    <property type="protein sequence ID" value="CAC11226.1"/>
    <property type="molecule type" value="Genomic_DNA"/>
</dbReference>
<dbReference type="RefSeq" id="WP_010900506.1">
    <property type="nucleotide sequence ID" value="NC_002578.1"/>
</dbReference>
<dbReference type="SMR" id="Q9HLZ5"/>
<dbReference type="STRING" id="273075.gene:9571293"/>
<dbReference type="PaxDb" id="273075-Ta0078"/>
<dbReference type="DNASU" id="1455738"/>
<dbReference type="EnsemblBacteria" id="CAC11226">
    <property type="protein sequence ID" value="CAC11226"/>
    <property type="gene ID" value="CAC11226"/>
</dbReference>
<dbReference type="KEGG" id="tac:Ta0078"/>
<dbReference type="eggNOG" id="arCOG04272">
    <property type="taxonomic scope" value="Archaea"/>
</dbReference>
<dbReference type="HOGENOM" id="CLU_053134_0_0_2"/>
<dbReference type="InParanoid" id="Q9HLZ5"/>
<dbReference type="OrthoDB" id="9136at2157"/>
<dbReference type="Proteomes" id="UP000001024">
    <property type="component" value="Chromosome"/>
</dbReference>
<dbReference type="GO" id="GO:0008939">
    <property type="term" value="F:nicotinate-nucleotide-dimethylbenzimidazole phosphoribosyltransferase activity"/>
    <property type="evidence" value="ECO:0007669"/>
    <property type="project" value="InterPro"/>
</dbReference>
<dbReference type="CDD" id="cd02439">
    <property type="entry name" value="DMB-PRT_CobT"/>
    <property type="match status" value="1"/>
</dbReference>
<dbReference type="Gene3D" id="3.40.50.10210">
    <property type="match status" value="1"/>
</dbReference>
<dbReference type="HAMAP" id="MF_01086">
    <property type="entry name" value="UPF0284"/>
    <property type="match status" value="1"/>
</dbReference>
<dbReference type="InterPro" id="IPR003200">
    <property type="entry name" value="Nict_dMeBzImd_PRibTrfase"/>
</dbReference>
<dbReference type="InterPro" id="IPR002805">
    <property type="entry name" value="Nict_dMeBzImd_PRibTrfase_arc"/>
</dbReference>
<dbReference type="InterPro" id="IPR036087">
    <property type="entry name" value="Nict_dMeBzImd_PRibTrfase_sf"/>
</dbReference>
<dbReference type="NCBIfam" id="NF003372">
    <property type="entry name" value="PRK04447.1-5"/>
    <property type="match status" value="1"/>
</dbReference>
<dbReference type="PANTHER" id="PTHR38811">
    <property type="match status" value="1"/>
</dbReference>
<dbReference type="PANTHER" id="PTHR38811:SF1">
    <property type="entry name" value="UPF0284 PROTEIN SLL1500"/>
    <property type="match status" value="1"/>
</dbReference>
<dbReference type="SUPFAM" id="SSF52733">
    <property type="entry name" value="Nicotinate mononucleotide:5,6-dimethylbenzimidazole phosphoribosyltransferase (CobT)"/>
    <property type="match status" value="1"/>
</dbReference>
<sequence>MIIDDVIIGKGIGDIEFSRENTIFVLIAGTTEVSLRSGITAAGASPEFTRITPTVDAEIIGEGKCLSTADPPMTPEGIPTPAIVSRAILDLTGLRSLIVNGGFSVRPKTAFFETYIEPSRDPGLDRAVMEAERVMEAGRRLGKILDGNFKNIILGESFPGGTTTAYVVLRSLGIDSGTSSSMPVDPDNLKKKVAEESFRRRNVRSPLEAATEYGDNLMIFMIGLAESIRSSKMILGGGTQMANAANLIAKVNGRTDQVVATTQWVFSHRSDLFRILGLEDRSIISVMDFGRMRNNGLRLYNQGHVREGVGMGALYSYARIAGFSREEIESAIDDFYTTFLR</sequence>
<name>Y078_THEAC</name>
<gene>
    <name type="ordered locus">Ta0078</name>
</gene>
<keyword id="KW-1185">Reference proteome</keyword>
<feature type="chain" id="PRO_0000151063" description="UPF0284 protein Ta0078">
    <location>
        <begin position="1"/>
        <end position="341"/>
    </location>
</feature>
<accession>Q9HLZ5</accession>
<proteinExistence type="inferred from homology"/>
<protein>
    <recommendedName>
        <fullName evidence="1">UPF0284 protein Ta0078</fullName>
    </recommendedName>
</protein>
<evidence type="ECO:0000255" key="1">
    <source>
        <dbReference type="HAMAP-Rule" id="MF_01086"/>
    </source>
</evidence>
<organism>
    <name type="scientific">Thermoplasma acidophilum (strain ATCC 25905 / DSM 1728 / JCM 9062 / NBRC 15155 / AMRC-C165)</name>
    <dbReference type="NCBI Taxonomy" id="273075"/>
    <lineage>
        <taxon>Archaea</taxon>
        <taxon>Methanobacteriati</taxon>
        <taxon>Thermoplasmatota</taxon>
        <taxon>Thermoplasmata</taxon>
        <taxon>Thermoplasmatales</taxon>
        <taxon>Thermoplasmataceae</taxon>
        <taxon>Thermoplasma</taxon>
    </lineage>
</organism>